<gene>
    <name evidence="1" type="primary">nusB</name>
    <name type="ordered locus">SGR_6044</name>
</gene>
<organism>
    <name type="scientific">Streptomyces griseus subsp. griseus (strain JCM 4626 / CBS 651.72 / NBRC 13350 / KCC S-0626 / ISP 5235)</name>
    <dbReference type="NCBI Taxonomy" id="455632"/>
    <lineage>
        <taxon>Bacteria</taxon>
        <taxon>Bacillati</taxon>
        <taxon>Actinomycetota</taxon>
        <taxon>Actinomycetes</taxon>
        <taxon>Kitasatosporales</taxon>
        <taxon>Streptomycetaceae</taxon>
        <taxon>Streptomyces</taxon>
    </lineage>
</organism>
<proteinExistence type="inferred from homology"/>
<accession>B1W456</accession>
<protein>
    <recommendedName>
        <fullName evidence="1">Transcription antitermination protein NusB</fullName>
    </recommendedName>
    <alternativeName>
        <fullName evidence="1">Antitermination factor NusB</fullName>
    </alternativeName>
</protein>
<feature type="chain" id="PRO_1000092589" description="Transcription antitermination protein NusB">
    <location>
        <begin position="1"/>
        <end position="143"/>
    </location>
</feature>
<dbReference type="EMBL" id="AP009493">
    <property type="protein sequence ID" value="BAG22873.1"/>
    <property type="molecule type" value="Genomic_DNA"/>
</dbReference>
<dbReference type="RefSeq" id="WP_003970357.1">
    <property type="nucleotide sequence ID" value="NC_010572.1"/>
</dbReference>
<dbReference type="SMR" id="B1W456"/>
<dbReference type="KEGG" id="sgr:SGR_6044"/>
<dbReference type="eggNOG" id="COG0781">
    <property type="taxonomic scope" value="Bacteria"/>
</dbReference>
<dbReference type="HOGENOM" id="CLU_087843_2_3_11"/>
<dbReference type="Proteomes" id="UP000001685">
    <property type="component" value="Chromosome"/>
</dbReference>
<dbReference type="GO" id="GO:0005829">
    <property type="term" value="C:cytosol"/>
    <property type="evidence" value="ECO:0007669"/>
    <property type="project" value="TreeGrafter"/>
</dbReference>
<dbReference type="GO" id="GO:0003723">
    <property type="term" value="F:RNA binding"/>
    <property type="evidence" value="ECO:0007669"/>
    <property type="project" value="UniProtKB-UniRule"/>
</dbReference>
<dbReference type="GO" id="GO:0006353">
    <property type="term" value="P:DNA-templated transcription termination"/>
    <property type="evidence" value="ECO:0007669"/>
    <property type="project" value="UniProtKB-UniRule"/>
</dbReference>
<dbReference type="GO" id="GO:0031564">
    <property type="term" value="P:transcription antitermination"/>
    <property type="evidence" value="ECO:0007669"/>
    <property type="project" value="UniProtKB-KW"/>
</dbReference>
<dbReference type="Gene3D" id="1.10.940.10">
    <property type="entry name" value="NusB-like"/>
    <property type="match status" value="1"/>
</dbReference>
<dbReference type="HAMAP" id="MF_00073">
    <property type="entry name" value="NusB"/>
    <property type="match status" value="1"/>
</dbReference>
<dbReference type="InterPro" id="IPR035926">
    <property type="entry name" value="NusB-like_sf"/>
</dbReference>
<dbReference type="InterPro" id="IPR011605">
    <property type="entry name" value="NusB_fam"/>
</dbReference>
<dbReference type="InterPro" id="IPR006027">
    <property type="entry name" value="NusB_RsmB_TIM44"/>
</dbReference>
<dbReference type="NCBIfam" id="TIGR01951">
    <property type="entry name" value="nusB"/>
    <property type="match status" value="1"/>
</dbReference>
<dbReference type="PANTHER" id="PTHR11078:SF3">
    <property type="entry name" value="ANTITERMINATION NUSB DOMAIN-CONTAINING PROTEIN"/>
    <property type="match status" value="1"/>
</dbReference>
<dbReference type="PANTHER" id="PTHR11078">
    <property type="entry name" value="N UTILIZATION SUBSTANCE PROTEIN B-RELATED"/>
    <property type="match status" value="1"/>
</dbReference>
<dbReference type="Pfam" id="PF01029">
    <property type="entry name" value="NusB"/>
    <property type="match status" value="1"/>
</dbReference>
<dbReference type="SUPFAM" id="SSF48013">
    <property type="entry name" value="NusB-like"/>
    <property type="match status" value="1"/>
</dbReference>
<comment type="function">
    <text evidence="1">Involved in transcription antitermination. Required for transcription of ribosomal RNA (rRNA) genes. Binds specifically to the boxA antiterminator sequence of the ribosomal RNA (rrn) operons.</text>
</comment>
<comment type="similarity">
    <text evidence="1">Belongs to the NusB family.</text>
</comment>
<evidence type="ECO:0000255" key="1">
    <source>
        <dbReference type="HAMAP-Rule" id="MF_00073"/>
    </source>
</evidence>
<name>NUSB_STRGG</name>
<keyword id="KW-0694">RNA-binding</keyword>
<keyword id="KW-0804">Transcription</keyword>
<keyword id="KW-0889">Transcription antitermination</keyword>
<keyword id="KW-0805">Transcription regulation</keyword>
<reference key="1">
    <citation type="journal article" date="2008" name="J. Bacteriol.">
        <title>Genome sequence of the streptomycin-producing microorganism Streptomyces griseus IFO 13350.</title>
        <authorList>
            <person name="Ohnishi Y."/>
            <person name="Ishikawa J."/>
            <person name="Hara H."/>
            <person name="Suzuki H."/>
            <person name="Ikenoya M."/>
            <person name="Ikeda H."/>
            <person name="Yamashita A."/>
            <person name="Hattori M."/>
            <person name="Horinouchi S."/>
        </authorList>
    </citation>
    <scope>NUCLEOTIDE SEQUENCE [LARGE SCALE GENOMIC DNA]</scope>
    <source>
        <strain>JCM 4626 / CBS 651.72 / NBRC 13350 / KCC S-0626 / ISP 5235</strain>
    </source>
</reference>
<sequence>MAARNKARKRAFQILFEADQRGESVQSVLADWVRLSRTDDRQPPVGEFTMELVEGYAQYADRIDDLIVTYAVDWEIDRMPVVDRSILRLGAYELIWMDGTPDAVVIDEAVQLAKEFSTDDSPSFVNGLLARFKDLKPNLRREQ</sequence>